<gene>
    <name evidence="1" type="primary">arnD</name>
    <name type="ordered locus">Spro_2157</name>
</gene>
<keyword id="KW-0046">Antibiotic resistance</keyword>
<keyword id="KW-0378">Hydrolase</keyword>
<keyword id="KW-0441">Lipid A biosynthesis</keyword>
<keyword id="KW-0444">Lipid biosynthesis</keyword>
<keyword id="KW-0443">Lipid metabolism</keyword>
<keyword id="KW-0448">Lipopolysaccharide biosynthesis</keyword>
<evidence type="ECO:0000255" key="1">
    <source>
        <dbReference type="HAMAP-Rule" id="MF_01870"/>
    </source>
</evidence>
<feature type="chain" id="PRO_0000383540" description="Probable 4-deoxy-4-formamido-L-arabinose-phosphoundecaprenol deformylase ArnD">
    <location>
        <begin position="1"/>
        <end position="301"/>
    </location>
</feature>
<feature type="domain" description="NodB homology" evidence="1">
    <location>
        <begin position="2"/>
        <end position="261"/>
    </location>
</feature>
<protein>
    <recommendedName>
        <fullName evidence="1">Probable 4-deoxy-4-formamido-L-arabinose-phosphoundecaprenol deformylase ArnD</fullName>
        <ecNumber evidence="1">3.5.1.n3</ecNumber>
    </recommendedName>
</protein>
<comment type="function">
    <text evidence="1">Catalyzes the deformylation of 4-deoxy-4-formamido-L-arabinose-phosphoundecaprenol to 4-amino-4-deoxy-L-arabinose-phosphoundecaprenol. The modified arabinose is attached to lipid A and is required for resistance to polymyxin and cationic antimicrobial peptides.</text>
</comment>
<comment type="catalytic activity">
    <reaction evidence="1">
        <text>4-deoxy-4-formamido-alpha-L-arabinopyranosyl di-trans,octa-cis-undecaprenyl phosphate + H2O = 4-amino-4-deoxy-alpha-L-arabinopyranosyl di-trans,octa-cis-undecaprenyl phosphate + formate</text>
        <dbReference type="Rhea" id="RHEA:27734"/>
        <dbReference type="ChEBI" id="CHEBI:15377"/>
        <dbReference type="ChEBI" id="CHEBI:15740"/>
        <dbReference type="ChEBI" id="CHEBI:58909"/>
        <dbReference type="ChEBI" id="CHEBI:60463"/>
        <dbReference type="EC" id="3.5.1.n3"/>
    </reaction>
</comment>
<comment type="pathway">
    <text evidence="1">Glycolipid biosynthesis; 4-amino-4-deoxy-alpha-L-arabinose undecaprenyl phosphate biosynthesis; 4-amino-4-deoxy-alpha-L-arabinose undecaprenyl phosphate from UDP-4-deoxy-4-formamido-beta-L-arabinose and undecaprenyl phosphate: step 2/2.</text>
</comment>
<comment type="pathway">
    <text evidence="1">Bacterial outer membrane biogenesis; lipopolysaccharide biosynthesis.</text>
</comment>
<comment type="similarity">
    <text evidence="1">Belongs to the polysaccharide deacetylase family. ArnD deformylase subfamily.</text>
</comment>
<sequence>MKKVGLRVDVDTFSGTREGVPQLLELFDKYNIQASFFFSVGPDNMGRHLWRLLRPKFLWKMLRSNAASLYGWDILLAGTAWPGRNIARALGPLMKLTAQAGHEVGLHAWDHQGWQAKVGRWSEAQLMQQVQLGVDALANSTGQPVKCSAVAGWRADTRVLEVKQRFGFHYNSDCRGTHPFRPVLSDGRLGTVQIPVTLPTFDEVIGSEVSMNDFNDYILREIENDRGVPVYTIHTEVEGMSQAAMFEQLLLRAQRQGIEFCPLSALLPQDLASLPLGRVERAPFPGREGWLGCQTDVKDDS</sequence>
<proteinExistence type="inferred from homology"/>
<reference key="1">
    <citation type="submission" date="2007-09" db="EMBL/GenBank/DDBJ databases">
        <title>Complete sequence of chromosome of Serratia proteamaculans 568.</title>
        <authorList>
            <consortium name="US DOE Joint Genome Institute"/>
            <person name="Copeland A."/>
            <person name="Lucas S."/>
            <person name="Lapidus A."/>
            <person name="Barry K."/>
            <person name="Glavina del Rio T."/>
            <person name="Dalin E."/>
            <person name="Tice H."/>
            <person name="Pitluck S."/>
            <person name="Chain P."/>
            <person name="Malfatti S."/>
            <person name="Shin M."/>
            <person name="Vergez L."/>
            <person name="Schmutz J."/>
            <person name="Larimer F."/>
            <person name="Land M."/>
            <person name="Hauser L."/>
            <person name="Kyrpides N."/>
            <person name="Kim E."/>
            <person name="Taghavi S."/>
            <person name="Newman L."/>
            <person name="Vangronsveld J."/>
            <person name="van der Lelie D."/>
            <person name="Richardson P."/>
        </authorList>
    </citation>
    <scope>NUCLEOTIDE SEQUENCE [LARGE SCALE GENOMIC DNA]</scope>
    <source>
        <strain>568</strain>
    </source>
</reference>
<accession>A8GDR8</accession>
<name>ARND_SERP5</name>
<dbReference type="EC" id="3.5.1.n3" evidence="1"/>
<dbReference type="EMBL" id="CP000826">
    <property type="protein sequence ID" value="ABV41258.1"/>
    <property type="molecule type" value="Genomic_DNA"/>
</dbReference>
<dbReference type="SMR" id="A8GDR8"/>
<dbReference type="STRING" id="399741.Spro_2157"/>
<dbReference type="KEGG" id="spe:Spro_2157"/>
<dbReference type="eggNOG" id="COG0726">
    <property type="taxonomic scope" value="Bacteria"/>
</dbReference>
<dbReference type="HOGENOM" id="CLU_084199_0_0_6"/>
<dbReference type="OrthoDB" id="5589314at2"/>
<dbReference type="UniPathway" id="UPA00030"/>
<dbReference type="UniPathway" id="UPA00036">
    <property type="reaction ID" value="UER00496"/>
</dbReference>
<dbReference type="GO" id="GO:0016020">
    <property type="term" value="C:membrane"/>
    <property type="evidence" value="ECO:0007669"/>
    <property type="project" value="GOC"/>
</dbReference>
<dbReference type="GO" id="GO:0016811">
    <property type="term" value="F:hydrolase activity, acting on carbon-nitrogen (but not peptide) bonds, in linear amides"/>
    <property type="evidence" value="ECO:0007669"/>
    <property type="project" value="UniProtKB-UniRule"/>
</dbReference>
<dbReference type="GO" id="GO:0036108">
    <property type="term" value="P:4-amino-4-deoxy-alpha-L-arabinopyranosyl undecaprenyl phosphate biosynthetic process"/>
    <property type="evidence" value="ECO:0007669"/>
    <property type="project" value="UniProtKB-UniRule"/>
</dbReference>
<dbReference type="GO" id="GO:0009245">
    <property type="term" value="P:lipid A biosynthetic process"/>
    <property type="evidence" value="ECO:0007669"/>
    <property type="project" value="UniProtKB-UniRule"/>
</dbReference>
<dbReference type="GO" id="GO:0009103">
    <property type="term" value="P:lipopolysaccharide biosynthetic process"/>
    <property type="evidence" value="ECO:0007669"/>
    <property type="project" value="UniProtKB-UniRule"/>
</dbReference>
<dbReference type="GO" id="GO:0046677">
    <property type="term" value="P:response to antibiotic"/>
    <property type="evidence" value="ECO:0007669"/>
    <property type="project" value="UniProtKB-KW"/>
</dbReference>
<dbReference type="CDD" id="cd10939">
    <property type="entry name" value="CE4_ArnD"/>
    <property type="match status" value="1"/>
</dbReference>
<dbReference type="Gene3D" id="3.20.20.370">
    <property type="entry name" value="Glycoside hydrolase/deacetylase"/>
    <property type="match status" value="1"/>
</dbReference>
<dbReference type="HAMAP" id="MF_01870">
    <property type="entry name" value="ArnD"/>
    <property type="match status" value="1"/>
</dbReference>
<dbReference type="InterPro" id="IPR023557">
    <property type="entry name" value="ArnD"/>
</dbReference>
<dbReference type="InterPro" id="IPR011330">
    <property type="entry name" value="Glyco_hydro/deAcase_b/a-brl"/>
</dbReference>
<dbReference type="InterPro" id="IPR002509">
    <property type="entry name" value="NODB_dom"/>
</dbReference>
<dbReference type="InterPro" id="IPR050248">
    <property type="entry name" value="Polysacc_deacetylase_ArnD"/>
</dbReference>
<dbReference type="NCBIfam" id="NF011923">
    <property type="entry name" value="PRK15394.1"/>
    <property type="match status" value="1"/>
</dbReference>
<dbReference type="PANTHER" id="PTHR10587:SF137">
    <property type="entry name" value="4-DEOXY-4-FORMAMIDO-L-ARABINOSE-PHOSPHOUNDECAPRENOL DEFORMYLASE ARND-RELATED"/>
    <property type="match status" value="1"/>
</dbReference>
<dbReference type="PANTHER" id="PTHR10587">
    <property type="entry name" value="GLYCOSYL TRANSFERASE-RELATED"/>
    <property type="match status" value="1"/>
</dbReference>
<dbReference type="Pfam" id="PF01522">
    <property type="entry name" value="Polysacc_deac_1"/>
    <property type="match status" value="1"/>
</dbReference>
<dbReference type="SUPFAM" id="SSF88713">
    <property type="entry name" value="Glycoside hydrolase/deacetylase"/>
    <property type="match status" value="1"/>
</dbReference>
<dbReference type="PROSITE" id="PS51677">
    <property type="entry name" value="NODB"/>
    <property type="match status" value="1"/>
</dbReference>
<organism>
    <name type="scientific">Serratia proteamaculans (strain 568)</name>
    <dbReference type="NCBI Taxonomy" id="399741"/>
    <lineage>
        <taxon>Bacteria</taxon>
        <taxon>Pseudomonadati</taxon>
        <taxon>Pseudomonadota</taxon>
        <taxon>Gammaproteobacteria</taxon>
        <taxon>Enterobacterales</taxon>
        <taxon>Yersiniaceae</taxon>
        <taxon>Serratia</taxon>
    </lineage>
</organism>